<keyword id="KW-1185">Reference proteome</keyword>
<keyword id="KW-0687">Ribonucleoprotein</keyword>
<keyword id="KW-0689">Ribosomal protein</keyword>
<keyword id="KW-0694">RNA-binding</keyword>
<keyword id="KW-0699">rRNA-binding</keyword>
<reference key="1">
    <citation type="journal article" date="2001" name="Nucleic Acids Res.">
        <title>The complete genome sequence of the murine respiratory pathogen Mycoplasma pulmonis.</title>
        <authorList>
            <person name="Chambaud I."/>
            <person name="Heilig R."/>
            <person name="Ferris S."/>
            <person name="Barbe V."/>
            <person name="Samson D."/>
            <person name="Galisson F."/>
            <person name="Moszer I."/>
            <person name="Dybvig K."/>
            <person name="Wroblewski H."/>
            <person name="Viari A."/>
            <person name="Rocha E.P.C."/>
            <person name="Blanchard A."/>
        </authorList>
    </citation>
    <scope>NUCLEOTIDE SEQUENCE [LARGE SCALE GENOMIC DNA]</scope>
    <source>
        <strain>UAB CTIP</strain>
    </source>
</reference>
<gene>
    <name evidence="1" type="primary">rpsT</name>
    <name type="ordered locus">MYPU_6560</name>
</gene>
<dbReference type="EMBL" id="AL445565">
    <property type="protein sequence ID" value="CAC13829.1"/>
    <property type="status" value="ALT_INIT"/>
    <property type="molecule type" value="Genomic_DNA"/>
</dbReference>
<dbReference type="PIR" id="H90593">
    <property type="entry name" value="H90593"/>
</dbReference>
<dbReference type="RefSeq" id="WP_010925457.1">
    <property type="nucleotide sequence ID" value="NC_002771.1"/>
</dbReference>
<dbReference type="SMR" id="Q98PR3"/>
<dbReference type="STRING" id="272635.gene:17577263"/>
<dbReference type="KEGG" id="mpu:MYPU_6560"/>
<dbReference type="eggNOG" id="COG0268">
    <property type="taxonomic scope" value="Bacteria"/>
</dbReference>
<dbReference type="HOGENOM" id="CLU_160655_1_2_14"/>
<dbReference type="BioCyc" id="MPUL272635:G1GT6-664-MONOMER"/>
<dbReference type="Proteomes" id="UP000000528">
    <property type="component" value="Chromosome"/>
</dbReference>
<dbReference type="GO" id="GO:0005829">
    <property type="term" value="C:cytosol"/>
    <property type="evidence" value="ECO:0007669"/>
    <property type="project" value="TreeGrafter"/>
</dbReference>
<dbReference type="GO" id="GO:0015935">
    <property type="term" value="C:small ribosomal subunit"/>
    <property type="evidence" value="ECO:0007669"/>
    <property type="project" value="TreeGrafter"/>
</dbReference>
<dbReference type="GO" id="GO:0070181">
    <property type="term" value="F:small ribosomal subunit rRNA binding"/>
    <property type="evidence" value="ECO:0007669"/>
    <property type="project" value="TreeGrafter"/>
</dbReference>
<dbReference type="GO" id="GO:0003735">
    <property type="term" value="F:structural constituent of ribosome"/>
    <property type="evidence" value="ECO:0007669"/>
    <property type="project" value="InterPro"/>
</dbReference>
<dbReference type="GO" id="GO:0006412">
    <property type="term" value="P:translation"/>
    <property type="evidence" value="ECO:0007669"/>
    <property type="project" value="UniProtKB-UniRule"/>
</dbReference>
<dbReference type="Gene3D" id="1.20.58.110">
    <property type="entry name" value="Ribosomal protein S20"/>
    <property type="match status" value="1"/>
</dbReference>
<dbReference type="HAMAP" id="MF_00500">
    <property type="entry name" value="Ribosomal_bS20"/>
    <property type="match status" value="1"/>
</dbReference>
<dbReference type="InterPro" id="IPR002583">
    <property type="entry name" value="Ribosomal_bS20"/>
</dbReference>
<dbReference type="InterPro" id="IPR036510">
    <property type="entry name" value="Ribosomal_bS20_sf"/>
</dbReference>
<dbReference type="NCBIfam" id="TIGR00029">
    <property type="entry name" value="S20"/>
    <property type="match status" value="1"/>
</dbReference>
<dbReference type="PANTHER" id="PTHR33398">
    <property type="entry name" value="30S RIBOSOMAL PROTEIN S20"/>
    <property type="match status" value="1"/>
</dbReference>
<dbReference type="PANTHER" id="PTHR33398:SF1">
    <property type="entry name" value="SMALL RIBOSOMAL SUBUNIT PROTEIN BS20C"/>
    <property type="match status" value="1"/>
</dbReference>
<dbReference type="Pfam" id="PF01649">
    <property type="entry name" value="Ribosomal_S20p"/>
    <property type="match status" value="1"/>
</dbReference>
<dbReference type="SUPFAM" id="SSF46992">
    <property type="entry name" value="Ribosomal protein S20"/>
    <property type="match status" value="1"/>
</dbReference>
<evidence type="ECO:0000255" key="1">
    <source>
        <dbReference type="HAMAP-Rule" id="MF_00500"/>
    </source>
</evidence>
<evidence type="ECO:0000256" key="2">
    <source>
        <dbReference type="SAM" id="MobiDB-lite"/>
    </source>
</evidence>
<evidence type="ECO:0000305" key="3"/>
<proteinExistence type="inferred from homology"/>
<comment type="function">
    <text evidence="1">Binds directly to 16S ribosomal RNA.</text>
</comment>
<comment type="similarity">
    <text evidence="1">Belongs to the bacterial ribosomal protein bS20 family.</text>
</comment>
<comment type="sequence caution" evidence="3">
    <conflict type="erroneous initiation">
        <sequence resource="EMBL-CDS" id="CAC13829"/>
    </conflict>
</comment>
<accession>Q98PR3</accession>
<sequence>MANIKSKIKSIKTMEKARKRNSMIKSRVKTSIKKAKLAITQDSDNAKKLVSDAHHEIHKAKSKGVFHKNTALRKSSRLDLFFNKHMKSA</sequence>
<organism>
    <name type="scientific">Mycoplasmopsis pulmonis (strain UAB CTIP)</name>
    <name type="common">Mycoplasma pulmonis</name>
    <dbReference type="NCBI Taxonomy" id="272635"/>
    <lineage>
        <taxon>Bacteria</taxon>
        <taxon>Bacillati</taxon>
        <taxon>Mycoplasmatota</taxon>
        <taxon>Mycoplasmoidales</taxon>
        <taxon>Metamycoplasmataceae</taxon>
        <taxon>Mycoplasmopsis</taxon>
    </lineage>
</organism>
<name>RS20_MYCPU</name>
<feature type="chain" id="PRO_0000167996" description="Small ribosomal subunit protein bS20">
    <location>
        <begin position="1"/>
        <end position="89"/>
    </location>
</feature>
<feature type="region of interest" description="Disordered" evidence="2">
    <location>
        <begin position="1"/>
        <end position="29"/>
    </location>
</feature>
<feature type="compositionally biased region" description="Basic residues" evidence="2">
    <location>
        <begin position="1"/>
        <end position="10"/>
    </location>
</feature>
<feature type="compositionally biased region" description="Basic residues" evidence="2">
    <location>
        <begin position="17"/>
        <end position="29"/>
    </location>
</feature>
<protein>
    <recommendedName>
        <fullName evidence="1">Small ribosomal subunit protein bS20</fullName>
    </recommendedName>
    <alternativeName>
        <fullName evidence="3">30S ribosomal protein S20</fullName>
    </alternativeName>
</protein>